<gene>
    <name type="primary">XERICO</name>
    <name type="ordered locus">At2g04240</name>
    <name type="ORF">T23O15.13</name>
</gene>
<reference key="1">
    <citation type="journal article" date="1999" name="Nature">
        <title>Sequence and analysis of chromosome 2 of the plant Arabidopsis thaliana.</title>
        <authorList>
            <person name="Lin X."/>
            <person name="Kaul S."/>
            <person name="Rounsley S.D."/>
            <person name="Shea T.P."/>
            <person name="Benito M.-I."/>
            <person name="Town C.D."/>
            <person name="Fujii C.Y."/>
            <person name="Mason T.M."/>
            <person name="Bowman C.L."/>
            <person name="Barnstead M.E."/>
            <person name="Feldblyum T.V."/>
            <person name="Buell C.R."/>
            <person name="Ketchum K.A."/>
            <person name="Lee J.J."/>
            <person name="Ronning C.M."/>
            <person name="Koo H.L."/>
            <person name="Moffat K.S."/>
            <person name="Cronin L.A."/>
            <person name="Shen M."/>
            <person name="Pai G."/>
            <person name="Van Aken S."/>
            <person name="Umayam L."/>
            <person name="Tallon L.J."/>
            <person name="Gill J.E."/>
            <person name="Adams M.D."/>
            <person name="Carrera A.J."/>
            <person name="Creasy T.H."/>
            <person name="Goodman H.M."/>
            <person name="Somerville C.R."/>
            <person name="Copenhaver G.P."/>
            <person name="Preuss D."/>
            <person name="Nierman W.C."/>
            <person name="White O."/>
            <person name="Eisen J.A."/>
            <person name="Salzberg S.L."/>
            <person name="Fraser C.M."/>
            <person name="Venter J.C."/>
        </authorList>
    </citation>
    <scope>NUCLEOTIDE SEQUENCE [LARGE SCALE GENOMIC DNA]</scope>
    <source>
        <strain>cv. Columbia</strain>
    </source>
</reference>
<reference key="2">
    <citation type="journal article" date="2017" name="Plant J.">
        <title>Araport11: a complete reannotation of the Arabidopsis thaliana reference genome.</title>
        <authorList>
            <person name="Cheng C.Y."/>
            <person name="Krishnakumar V."/>
            <person name="Chan A.P."/>
            <person name="Thibaud-Nissen F."/>
            <person name="Schobel S."/>
            <person name="Town C.D."/>
        </authorList>
    </citation>
    <scope>GENOME REANNOTATION</scope>
    <source>
        <strain>cv. Columbia</strain>
    </source>
</reference>
<reference key="3">
    <citation type="journal article" date="2003" name="Science">
        <title>Empirical analysis of transcriptional activity in the Arabidopsis genome.</title>
        <authorList>
            <person name="Yamada K."/>
            <person name="Lim J."/>
            <person name="Dale J.M."/>
            <person name="Chen H."/>
            <person name="Shinn P."/>
            <person name="Palm C.J."/>
            <person name="Southwick A.M."/>
            <person name="Wu H.C."/>
            <person name="Kim C.J."/>
            <person name="Nguyen M."/>
            <person name="Pham P.K."/>
            <person name="Cheuk R.F."/>
            <person name="Karlin-Newmann G."/>
            <person name="Liu S.X."/>
            <person name="Lam B."/>
            <person name="Sakano H."/>
            <person name="Wu T."/>
            <person name="Yu G."/>
            <person name="Miranda M."/>
            <person name="Quach H.L."/>
            <person name="Tripp M."/>
            <person name="Chang C.H."/>
            <person name="Lee J.M."/>
            <person name="Toriumi M.J."/>
            <person name="Chan M.M."/>
            <person name="Tang C.C."/>
            <person name="Onodera C.S."/>
            <person name="Deng J.M."/>
            <person name="Akiyama K."/>
            <person name="Ansari Y."/>
            <person name="Arakawa T."/>
            <person name="Banh J."/>
            <person name="Banno F."/>
            <person name="Bowser L."/>
            <person name="Brooks S.Y."/>
            <person name="Carninci P."/>
            <person name="Chao Q."/>
            <person name="Choy N."/>
            <person name="Enju A."/>
            <person name="Goldsmith A.D."/>
            <person name="Gurjal M."/>
            <person name="Hansen N.F."/>
            <person name="Hayashizaki Y."/>
            <person name="Johnson-Hopson C."/>
            <person name="Hsuan V.W."/>
            <person name="Iida K."/>
            <person name="Karnes M."/>
            <person name="Khan S."/>
            <person name="Koesema E."/>
            <person name="Ishida J."/>
            <person name="Jiang P.X."/>
            <person name="Jones T."/>
            <person name="Kawai J."/>
            <person name="Kamiya A."/>
            <person name="Meyers C."/>
            <person name="Nakajima M."/>
            <person name="Narusaka M."/>
            <person name="Seki M."/>
            <person name="Sakurai T."/>
            <person name="Satou M."/>
            <person name="Tamse R."/>
            <person name="Vaysberg M."/>
            <person name="Wallender E.K."/>
            <person name="Wong C."/>
            <person name="Yamamura Y."/>
            <person name="Yuan S."/>
            <person name="Shinozaki K."/>
            <person name="Davis R.W."/>
            <person name="Theologis A."/>
            <person name="Ecker J.R."/>
        </authorList>
    </citation>
    <scope>NUCLEOTIDE SEQUENCE [LARGE SCALE MRNA]</scope>
    <source>
        <strain>cv. Columbia</strain>
    </source>
</reference>
<reference key="4">
    <citation type="journal article" date="2006" name="Plant J.">
        <title>Upregulation of an Arabidopsis RING-H2 gene, XERICO, confers drought tolerance through increased abscisic acid biosynthesis.</title>
        <authorList>
            <person name="Ko J.-H."/>
            <person name="Yang S.H."/>
            <person name="Han K.-H."/>
        </authorList>
    </citation>
    <scope>FUNCTION</scope>
    <scope>TISSUE SPECIFICITY</scope>
    <scope>INDUCTION BY ABSCISIC ACID AND ABIOTIC STRESSES</scope>
    <scope>INTERACTION WITH UBC8 AND TULP9</scope>
    <source>
        <strain>cv. Columbia</strain>
    </source>
</reference>
<reference key="5">
    <citation type="journal article" date="2007" name="Plant Cell">
        <title>Global analysis of della direct targets in early gibberellin signaling in Arabidopsis.</title>
        <authorList>
            <person name="Zentella R."/>
            <person name="Zhang Z.L."/>
            <person name="Park M."/>
            <person name="Thomas S.G."/>
            <person name="Endo A."/>
            <person name="Murase K."/>
            <person name="Fleet C.M."/>
            <person name="Jikumaru Y."/>
            <person name="Nambara E."/>
            <person name="Kamiya Y."/>
            <person name="Sun T.P."/>
        </authorList>
    </citation>
    <scope>FUNCTION</scope>
    <scope>INDUCTION BY RGA AND GAI</scope>
    <scope>DISRUPTION PHENOTYPE</scope>
    <source>
        <strain>cv. Columbia</strain>
    </source>
</reference>
<reference key="6">
    <citation type="journal article" date="2008" name="Plant Cell">
        <title>The gibberellic acid signaling repressor RGL2 inhibits Arabidopsis seed germination by stimulating abscisic acid synthesis and ABI5 activity.</title>
        <authorList>
            <person name="Piskurewicz U."/>
            <person name="Jikumaru Y."/>
            <person name="Kinoshita N."/>
            <person name="Nambara E."/>
            <person name="Kamiya Y."/>
            <person name="Lopez-Molina L."/>
        </authorList>
    </citation>
    <scope>INDUCTION BY RGL2</scope>
</reference>
<reference key="7">
    <citation type="journal article" date="2013" name="Plant Physiol.">
        <title>Lifting della repression of Arabidopsis seed germination by nonproteolytic gibberellin signaling.</title>
        <authorList>
            <person name="Ariizumi T."/>
            <person name="Hauvermale A.L."/>
            <person name="Nelson S.K."/>
            <person name="Hanada A."/>
            <person name="Yamaguchi S."/>
            <person name="Steber C.M."/>
        </authorList>
    </citation>
    <scope>INDUCTION BY RGL2</scope>
</reference>
<sequence length="162" mass="17928">MGLSSLPGPSEGMLCVILVNTALSISIVKGIVRSFLGIVGISLSPSSSSPSSVTVSSENSSTSESFDFRVCQPESYLEEFRNRTPTLRFESLCRCKKQADNECSVCLSKFQGDSEINKLKCGHLFHKTCLEKWIDYWNITCPLCRTPLVVVPEDHQLSSNVW</sequence>
<keyword id="KW-0937">Abscisic acid biosynthesis</keyword>
<keyword id="KW-0472">Membrane</keyword>
<keyword id="KW-0479">Metal-binding</keyword>
<keyword id="KW-1185">Reference proteome</keyword>
<keyword id="KW-0808">Transferase</keyword>
<keyword id="KW-0812">Transmembrane</keyword>
<keyword id="KW-1133">Transmembrane helix</keyword>
<keyword id="KW-0833">Ubl conjugation pathway</keyword>
<keyword id="KW-0862">Zinc</keyword>
<keyword id="KW-0863">Zinc-finger</keyword>
<accession>Q9SI09</accession>
<feature type="chain" id="PRO_0000430492" description="Probable E3 ubiquitin-protein ligase XERICO">
    <location>
        <begin position="1"/>
        <end position="162"/>
    </location>
</feature>
<feature type="transmembrane region" description="Helical" evidence="1">
    <location>
        <begin position="12"/>
        <end position="28"/>
    </location>
</feature>
<feature type="zinc finger region" description="RING-type; atypical" evidence="2">
    <location>
        <begin position="103"/>
        <end position="145"/>
    </location>
</feature>
<organism>
    <name type="scientific">Arabidopsis thaliana</name>
    <name type="common">Mouse-ear cress</name>
    <dbReference type="NCBI Taxonomy" id="3702"/>
    <lineage>
        <taxon>Eukaryota</taxon>
        <taxon>Viridiplantae</taxon>
        <taxon>Streptophyta</taxon>
        <taxon>Embryophyta</taxon>
        <taxon>Tracheophyta</taxon>
        <taxon>Spermatophyta</taxon>
        <taxon>Magnoliopsida</taxon>
        <taxon>eudicotyledons</taxon>
        <taxon>Gunneridae</taxon>
        <taxon>Pentapetalae</taxon>
        <taxon>rosids</taxon>
        <taxon>malvids</taxon>
        <taxon>Brassicales</taxon>
        <taxon>Brassicaceae</taxon>
        <taxon>Camelineae</taxon>
        <taxon>Arabidopsis</taxon>
    </lineage>
</organism>
<dbReference type="EC" id="2.3.2.27"/>
<dbReference type="EMBL" id="AC007213">
    <property type="protein sequence ID" value="AAD27914.1"/>
    <property type="molecule type" value="Genomic_DNA"/>
</dbReference>
<dbReference type="EMBL" id="CP002685">
    <property type="protein sequence ID" value="AEC05811.1"/>
    <property type="molecule type" value="Genomic_DNA"/>
</dbReference>
<dbReference type="EMBL" id="CP002685">
    <property type="protein sequence ID" value="AEC05812.1"/>
    <property type="molecule type" value="Genomic_DNA"/>
</dbReference>
<dbReference type="EMBL" id="AF324691">
    <property type="protein sequence ID" value="AAG40042.1"/>
    <property type="molecule type" value="mRNA"/>
</dbReference>
<dbReference type="EMBL" id="AF326867">
    <property type="protein sequence ID" value="AAG41449.1"/>
    <property type="molecule type" value="mRNA"/>
</dbReference>
<dbReference type="EMBL" id="AF339689">
    <property type="protein sequence ID" value="AAK00371.1"/>
    <property type="molecule type" value="mRNA"/>
</dbReference>
<dbReference type="PIR" id="E84455">
    <property type="entry name" value="E84455"/>
</dbReference>
<dbReference type="RefSeq" id="NP_178507.1">
    <property type="nucleotide sequence ID" value="NM_126459.3"/>
</dbReference>
<dbReference type="RefSeq" id="NP_973416.1">
    <property type="nucleotide sequence ID" value="NM_201687.1"/>
</dbReference>
<dbReference type="SMR" id="Q9SI09"/>
<dbReference type="BioGRID" id="363">
    <property type="interactions" value="8"/>
</dbReference>
<dbReference type="FunCoup" id="Q9SI09">
    <property type="interactions" value="59"/>
</dbReference>
<dbReference type="IntAct" id="Q9SI09">
    <property type="interactions" value="6"/>
</dbReference>
<dbReference type="STRING" id="3702.Q9SI09"/>
<dbReference type="PaxDb" id="3702-AT2G04240.2"/>
<dbReference type="EnsemblPlants" id="AT2G04240.1">
    <property type="protein sequence ID" value="AT2G04240.1"/>
    <property type="gene ID" value="AT2G04240"/>
</dbReference>
<dbReference type="EnsemblPlants" id="AT2G04240.2">
    <property type="protein sequence ID" value="AT2G04240.2"/>
    <property type="gene ID" value="AT2G04240"/>
</dbReference>
<dbReference type="GeneID" id="814962"/>
<dbReference type="Gramene" id="AT2G04240.1">
    <property type="protein sequence ID" value="AT2G04240.1"/>
    <property type="gene ID" value="AT2G04240"/>
</dbReference>
<dbReference type="Gramene" id="AT2G04240.2">
    <property type="protein sequence ID" value="AT2G04240.2"/>
    <property type="gene ID" value="AT2G04240"/>
</dbReference>
<dbReference type="KEGG" id="ath:AT2G04240"/>
<dbReference type="Araport" id="AT2G04240"/>
<dbReference type="TAIR" id="AT2G04240">
    <property type="gene designation" value="XERICO"/>
</dbReference>
<dbReference type="eggNOG" id="KOG0800">
    <property type="taxonomic scope" value="Eukaryota"/>
</dbReference>
<dbReference type="HOGENOM" id="CLU_013137_18_5_1"/>
<dbReference type="InParanoid" id="Q9SI09"/>
<dbReference type="OMA" id="DNSHVEC"/>
<dbReference type="PhylomeDB" id="Q9SI09"/>
<dbReference type="UniPathway" id="UPA00143"/>
<dbReference type="PRO" id="PR:Q9SI09"/>
<dbReference type="Proteomes" id="UP000006548">
    <property type="component" value="Chromosome 2"/>
</dbReference>
<dbReference type="ExpressionAtlas" id="Q9SI09">
    <property type="expression patterns" value="baseline and differential"/>
</dbReference>
<dbReference type="GO" id="GO:0016020">
    <property type="term" value="C:membrane"/>
    <property type="evidence" value="ECO:0007669"/>
    <property type="project" value="UniProtKB-SubCell"/>
</dbReference>
<dbReference type="GO" id="GO:0016740">
    <property type="term" value="F:transferase activity"/>
    <property type="evidence" value="ECO:0007669"/>
    <property type="project" value="UniProtKB-KW"/>
</dbReference>
<dbReference type="GO" id="GO:0008270">
    <property type="term" value="F:zinc ion binding"/>
    <property type="evidence" value="ECO:0007669"/>
    <property type="project" value="UniProtKB-KW"/>
</dbReference>
<dbReference type="GO" id="GO:0009688">
    <property type="term" value="P:abscisic acid biosynthetic process"/>
    <property type="evidence" value="ECO:0007669"/>
    <property type="project" value="UniProtKB-KW"/>
</dbReference>
<dbReference type="GO" id="GO:0009687">
    <property type="term" value="P:abscisic acid metabolic process"/>
    <property type="evidence" value="ECO:0000315"/>
    <property type="project" value="TAIR"/>
</dbReference>
<dbReference type="GO" id="GO:0016567">
    <property type="term" value="P:protein ubiquitination"/>
    <property type="evidence" value="ECO:0007669"/>
    <property type="project" value="UniProtKB-UniPathway"/>
</dbReference>
<dbReference type="GO" id="GO:0009739">
    <property type="term" value="P:response to gibberellin"/>
    <property type="evidence" value="ECO:0000270"/>
    <property type="project" value="TAIR"/>
</dbReference>
<dbReference type="GO" id="GO:0006970">
    <property type="term" value="P:response to osmotic stress"/>
    <property type="evidence" value="ECO:0000270"/>
    <property type="project" value="TAIR"/>
</dbReference>
<dbReference type="GO" id="GO:0009651">
    <property type="term" value="P:response to salt stress"/>
    <property type="evidence" value="ECO:0000270"/>
    <property type="project" value="TAIR"/>
</dbReference>
<dbReference type="CDD" id="cd23121">
    <property type="entry name" value="RING-H2_RHA1-like"/>
    <property type="match status" value="1"/>
</dbReference>
<dbReference type="Gene3D" id="3.30.40.10">
    <property type="entry name" value="Zinc/RING finger domain, C3HC4 (zinc finger)"/>
    <property type="match status" value="1"/>
</dbReference>
<dbReference type="InterPro" id="IPR044249">
    <property type="entry name" value="XERICO-like"/>
</dbReference>
<dbReference type="InterPro" id="IPR001841">
    <property type="entry name" value="Znf_RING"/>
</dbReference>
<dbReference type="InterPro" id="IPR013083">
    <property type="entry name" value="Znf_RING/FYVE/PHD"/>
</dbReference>
<dbReference type="PANTHER" id="PTHR47258">
    <property type="match status" value="1"/>
</dbReference>
<dbReference type="PANTHER" id="PTHR47258:SF1">
    <property type="entry name" value="E3 UBIQUITIN-PROTEIN LIGASE XERICO-RELATED"/>
    <property type="match status" value="1"/>
</dbReference>
<dbReference type="Pfam" id="PF13639">
    <property type="entry name" value="zf-RING_2"/>
    <property type="match status" value="1"/>
</dbReference>
<dbReference type="SMART" id="SM00184">
    <property type="entry name" value="RING"/>
    <property type="match status" value="1"/>
</dbReference>
<dbReference type="SUPFAM" id="SSF57850">
    <property type="entry name" value="RING/U-box"/>
    <property type="match status" value="1"/>
</dbReference>
<dbReference type="PROSITE" id="PS50089">
    <property type="entry name" value="ZF_RING_2"/>
    <property type="match status" value="1"/>
</dbReference>
<name>XERIC_ARATH</name>
<protein>
    <recommendedName>
        <fullName>Probable E3 ubiquitin-protein ligase XERICO</fullName>
        <ecNumber>2.3.2.27</ecNumber>
    </recommendedName>
    <alternativeName>
        <fullName>RING-type E3 ubiquitin transferase XERICO</fullName>
    </alternativeName>
</protein>
<evidence type="ECO:0000255" key="1"/>
<evidence type="ECO:0000255" key="2">
    <source>
        <dbReference type="PROSITE-ProRule" id="PRU00175"/>
    </source>
</evidence>
<evidence type="ECO:0000269" key="3">
    <source>
    </source>
</evidence>
<evidence type="ECO:0000269" key="4">
    <source>
    </source>
</evidence>
<evidence type="ECO:0000269" key="5">
    <source>
    </source>
</evidence>
<evidence type="ECO:0000269" key="6">
    <source>
    </source>
</evidence>
<evidence type="ECO:0000305" key="7"/>
<proteinExistence type="evidence at protein level"/>
<comment type="function">
    <text evidence="3 4">Function on abscisic acid homeostasis at post-translational level, probably through ubiquitin/proteasome-dependent substrate-specific degradation.</text>
</comment>
<comment type="catalytic activity">
    <reaction>
        <text>S-ubiquitinyl-[E2 ubiquitin-conjugating enzyme]-L-cysteine + [acceptor protein]-L-lysine = [E2 ubiquitin-conjugating enzyme]-L-cysteine + N(6)-ubiquitinyl-[acceptor protein]-L-lysine.</text>
        <dbReference type="EC" id="2.3.2.27"/>
    </reaction>
</comment>
<comment type="pathway">
    <text>Protein modification; protein ubiquitination.</text>
</comment>
<comment type="subunit">
    <text evidence="3">Interacts with UBC8 and TULP9.</text>
</comment>
<comment type="subcellular location">
    <subcellularLocation>
        <location evidence="7">Membrane</location>
        <topology evidence="7">Single-pass membrane protein</topology>
    </subcellularLocation>
</comment>
<comment type="tissue specificity">
    <text evidence="3">Ubiquitous. Higher expression in actively growing tissues.</text>
</comment>
<comment type="induction">
    <text evidence="3 4 5 6">Up-regulated by salt and osmotic stress. Not regulated by abscisic acid treatment. Up-regulated by the DELLA proteins RGL2, RGA and GAI.</text>
</comment>
<comment type="disruption phenotype">
    <text evidence="4">Contains lower amounts of endogenous abscisic acid and is more resistant to abscisic acid treatment during seedling establishment.</text>
</comment>